<feature type="chain" id="PRO_0000150313" description="Probable cysteine desulfurase">
    <location>
        <begin position="1"/>
        <end position="413"/>
    </location>
</feature>
<feature type="active site" description="Cysteine persulfide intermediate" evidence="1">
    <location>
        <position position="368"/>
    </location>
</feature>
<feature type="modified residue" description="N6-(pyridoxal phosphate)lysine" evidence="1">
    <location>
        <position position="229"/>
    </location>
</feature>
<gene>
    <name type="primary">csd</name>
    <name type="ordered locus">SAS0786</name>
</gene>
<organism>
    <name type="scientific">Staphylococcus aureus (strain MSSA476)</name>
    <dbReference type="NCBI Taxonomy" id="282459"/>
    <lineage>
        <taxon>Bacteria</taxon>
        <taxon>Bacillati</taxon>
        <taxon>Bacillota</taxon>
        <taxon>Bacilli</taxon>
        <taxon>Bacillales</taxon>
        <taxon>Staphylococcaceae</taxon>
        <taxon>Staphylococcus</taxon>
    </lineage>
</organism>
<reference key="1">
    <citation type="journal article" date="2004" name="Proc. Natl. Acad. Sci. U.S.A.">
        <title>Complete genomes of two clinical Staphylococcus aureus strains: evidence for the rapid evolution of virulence and drug resistance.</title>
        <authorList>
            <person name="Holden M.T.G."/>
            <person name="Feil E.J."/>
            <person name="Lindsay J.A."/>
            <person name="Peacock S.J."/>
            <person name="Day N.P.J."/>
            <person name="Enright M.C."/>
            <person name="Foster T.J."/>
            <person name="Moore C.E."/>
            <person name="Hurst L."/>
            <person name="Atkin R."/>
            <person name="Barron A."/>
            <person name="Bason N."/>
            <person name="Bentley S.D."/>
            <person name="Chillingworth C."/>
            <person name="Chillingworth T."/>
            <person name="Churcher C."/>
            <person name="Clark L."/>
            <person name="Corton C."/>
            <person name="Cronin A."/>
            <person name="Doggett J."/>
            <person name="Dowd L."/>
            <person name="Feltwell T."/>
            <person name="Hance Z."/>
            <person name="Harris B."/>
            <person name="Hauser H."/>
            <person name="Holroyd S."/>
            <person name="Jagels K."/>
            <person name="James K.D."/>
            <person name="Lennard N."/>
            <person name="Line A."/>
            <person name="Mayes R."/>
            <person name="Moule S."/>
            <person name="Mungall K."/>
            <person name="Ormond D."/>
            <person name="Quail M.A."/>
            <person name="Rabbinowitsch E."/>
            <person name="Rutherford K.M."/>
            <person name="Sanders M."/>
            <person name="Sharp S."/>
            <person name="Simmonds M."/>
            <person name="Stevens K."/>
            <person name="Whitehead S."/>
            <person name="Barrell B.G."/>
            <person name="Spratt B.G."/>
            <person name="Parkhill J."/>
        </authorList>
    </citation>
    <scope>NUCLEOTIDE SEQUENCE [LARGE SCALE GENOMIC DNA]</scope>
    <source>
        <strain>MSSA476</strain>
    </source>
</reference>
<proteinExistence type="inferred from homology"/>
<keyword id="KW-0663">Pyridoxal phosphate</keyword>
<keyword id="KW-0808">Transferase</keyword>
<comment type="function">
    <text evidence="1">Catalyzes the removal of elemental sulfur and selenium atoms from L-cysteine, L-cystine, L-selenocysteine, and L-selenocystine to produce L-alanine.</text>
</comment>
<comment type="catalytic activity">
    <reaction>
        <text>(sulfur carrier)-H + L-cysteine = (sulfur carrier)-SH + L-alanine</text>
        <dbReference type="Rhea" id="RHEA:43892"/>
        <dbReference type="Rhea" id="RHEA-COMP:14737"/>
        <dbReference type="Rhea" id="RHEA-COMP:14739"/>
        <dbReference type="ChEBI" id="CHEBI:29917"/>
        <dbReference type="ChEBI" id="CHEBI:35235"/>
        <dbReference type="ChEBI" id="CHEBI:57972"/>
        <dbReference type="ChEBI" id="CHEBI:64428"/>
        <dbReference type="EC" id="2.8.1.7"/>
    </reaction>
</comment>
<comment type="cofactor">
    <cofactor evidence="1">
        <name>pyridoxal 5'-phosphate</name>
        <dbReference type="ChEBI" id="CHEBI:597326"/>
    </cofactor>
</comment>
<comment type="similarity">
    <text evidence="2">Belongs to the class-V pyridoxal-phosphate-dependent aminotransferase family. Csd subfamily.</text>
</comment>
<protein>
    <recommendedName>
        <fullName>Probable cysteine desulfurase</fullName>
        <ecNumber>2.8.1.7</ecNumber>
    </recommendedName>
</protein>
<name>CSD_STAAS</name>
<accession>Q6GB11</accession>
<dbReference type="EC" id="2.8.1.7"/>
<dbReference type="EMBL" id="BX571857">
    <property type="protein sequence ID" value="CAG42560.1"/>
    <property type="molecule type" value="Genomic_DNA"/>
</dbReference>
<dbReference type="SMR" id="Q6GB11"/>
<dbReference type="KEGG" id="sas:SAS0786"/>
<dbReference type="HOGENOM" id="CLU_003433_2_5_9"/>
<dbReference type="GO" id="GO:0031071">
    <property type="term" value="F:cysteine desulfurase activity"/>
    <property type="evidence" value="ECO:0007669"/>
    <property type="project" value="UniProtKB-EC"/>
</dbReference>
<dbReference type="GO" id="GO:0030170">
    <property type="term" value="F:pyridoxal phosphate binding"/>
    <property type="evidence" value="ECO:0007669"/>
    <property type="project" value="InterPro"/>
</dbReference>
<dbReference type="GO" id="GO:0006534">
    <property type="term" value="P:cysteine metabolic process"/>
    <property type="evidence" value="ECO:0007669"/>
    <property type="project" value="InterPro"/>
</dbReference>
<dbReference type="CDD" id="cd06453">
    <property type="entry name" value="SufS_like"/>
    <property type="match status" value="1"/>
</dbReference>
<dbReference type="Gene3D" id="3.90.1150.10">
    <property type="entry name" value="Aspartate Aminotransferase, domain 1"/>
    <property type="match status" value="1"/>
</dbReference>
<dbReference type="Gene3D" id="3.40.640.10">
    <property type="entry name" value="Type I PLP-dependent aspartate aminotransferase-like (Major domain)"/>
    <property type="match status" value="1"/>
</dbReference>
<dbReference type="InterPro" id="IPR000192">
    <property type="entry name" value="Aminotrans_V_dom"/>
</dbReference>
<dbReference type="InterPro" id="IPR010970">
    <property type="entry name" value="Cys_dSase_SufS"/>
</dbReference>
<dbReference type="InterPro" id="IPR016454">
    <property type="entry name" value="Cysteine_dSase"/>
</dbReference>
<dbReference type="InterPro" id="IPR015424">
    <property type="entry name" value="PyrdxlP-dep_Trfase"/>
</dbReference>
<dbReference type="InterPro" id="IPR015421">
    <property type="entry name" value="PyrdxlP-dep_Trfase_major"/>
</dbReference>
<dbReference type="InterPro" id="IPR015422">
    <property type="entry name" value="PyrdxlP-dep_Trfase_small"/>
</dbReference>
<dbReference type="NCBIfam" id="TIGR01979">
    <property type="entry name" value="sufS"/>
    <property type="match status" value="1"/>
</dbReference>
<dbReference type="PANTHER" id="PTHR43586">
    <property type="entry name" value="CYSTEINE DESULFURASE"/>
    <property type="match status" value="1"/>
</dbReference>
<dbReference type="PANTHER" id="PTHR43586:SF8">
    <property type="entry name" value="CYSTEINE DESULFURASE 1, CHLOROPLASTIC"/>
    <property type="match status" value="1"/>
</dbReference>
<dbReference type="Pfam" id="PF00266">
    <property type="entry name" value="Aminotran_5"/>
    <property type="match status" value="1"/>
</dbReference>
<dbReference type="PIRSF" id="PIRSF005572">
    <property type="entry name" value="NifS"/>
    <property type="match status" value="1"/>
</dbReference>
<dbReference type="SUPFAM" id="SSF53383">
    <property type="entry name" value="PLP-dependent transferases"/>
    <property type="match status" value="1"/>
</dbReference>
<evidence type="ECO:0000250" key="1"/>
<evidence type="ECO:0000305" key="2"/>
<sequence>MAEHSFDVNEVIKDFPILDQKVNGKRLAYLDSTATSQTPVQVLNVLEDYYKRYNSNVHRGVHTLGSLATDGYENARETVRRFINAKYFEEIIFTRGTTASINLVAHSYGDANVEEGDEIVVTEMEHHANIVPWQQLAKRKNATLKFIPMTADGELNIEDIKQTINDKTKIVAIAHISNVLGTINDVKTIAEIAHQHGAIISVDGAQAAPHMKLDMQEMNADFYSFSGHKMLGPTGIGVLFGKRELLQKMEPIEFGGDMIDFVSKYDATWADLPTKFEAGTPLIAQAIGLAEAIRYLERIGFDAIHKYEQELTIYAYEQMSAIEGIEIYGPPKDRRAGVITFNLQDVHPHDVATAVDTEGVAVRAGHHCAQPLMKWLNVSSTARASFYIYNTKEDVDQLINALKQTKEFFSYEF</sequence>